<proteinExistence type="evidence at protein level"/>
<keyword id="KW-0002">3D-structure</keyword>
<keyword id="KW-0027">Amidation</keyword>
<keyword id="KW-1221">Calcium-activated potassium channel impairing toxin</keyword>
<keyword id="KW-0903">Direct protein sequencing</keyword>
<keyword id="KW-1015">Disulfide bond</keyword>
<keyword id="KW-0872">Ion channel impairing toxin</keyword>
<keyword id="KW-0528">Neurotoxin</keyword>
<keyword id="KW-0632">Potassium channel impairing toxin</keyword>
<keyword id="KW-0964">Secreted</keyword>
<keyword id="KW-0800">Toxin</keyword>
<evidence type="ECO:0000269" key="1">
    <source>
    </source>
</evidence>
<evidence type="ECO:0000269" key="2">
    <source>
    </source>
</evidence>
<evidence type="ECO:0000269" key="3">
    <source>
    </source>
</evidence>
<evidence type="ECO:0000269" key="4">
    <source>
    </source>
</evidence>
<evidence type="ECO:0000269" key="5">
    <source>
    </source>
</evidence>
<evidence type="ECO:0000303" key="6">
    <source>
    </source>
</evidence>
<evidence type="ECO:0000303" key="7">
    <source>
    </source>
</evidence>
<evidence type="ECO:0000303" key="8">
    <source>
    </source>
</evidence>
<evidence type="ECO:0000305" key="9"/>
<evidence type="ECO:0000305" key="10">
    <source>
    </source>
</evidence>
<evidence type="ECO:0000305" key="11">
    <source>
    </source>
</evidence>
<evidence type="ECO:0000312" key="12">
    <source>
        <dbReference type="PDB" id="1SCY"/>
    </source>
</evidence>
<evidence type="ECO:0007829" key="13">
    <source>
        <dbReference type="PDB" id="1SCY"/>
    </source>
</evidence>
<sequence>AFCNLRMCQLSCRSLGLLGKCIGDKCECVKH</sequence>
<reference key="1">
    <citation type="journal article" date="1988" name="J. Biol. Chem.">
        <title>Purification and characterization of a unique, potent inhibitor of apamin binding from Leiurus quinquestriatus hebraeus venom.</title>
        <authorList>
            <person name="Chicci G.G."/>
            <person name="Gimenez-Gallego G."/>
            <person name="Ber E."/>
            <person name="Garcia M.L."/>
            <person name="Winquist R."/>
            <person name="Cascieri M.A."/>
        </authorList>
    </citation>
    <scope>PROTEIN SEQUENCE</scope>
    <scope>FUNCTION</scope>
    <scope>AMIDATION AT HIS-31</scope>
    <scope>SUBUNIT</scope>
    <source>
        <tissue>Venom</tissue>
    </source>
</reference>
<reference key="2">
    <citation type="journal article" date="1990" name="J. Biol. Chem.">
        <title>Leiurotoxin I (scyllatoxin), a peptide ligand for Ca2(+)-activated K+ channels. Chemical synthesis, radiolabeling, and receptor characterization.</title>
        <authorList>
            <person name="Auguste P."/>
            <person name="Hugues M."/>
            <person name="Grave B."/>
            <person name="Gesquiere J.C."/>
            <person name="Maes P."/>
            <person name="Tartar A."/>
            <person name="Romey G."/>
            <person name="Schweitz H."/>
            <person name="Lazdunski M."/>
        </authorList>
    </citation>
    <scope>FUNCTION</scope>
    <scope>SYNTHESIS</scope>
</reference>
<reference key="3">
    <citation type="journal article" date="2001" name="J. Biol. Chem.">
        <title>Design and characterization of a highly selective peptide inhibitor of the small conductance calcium-activated K+ channel, SkCa2.</title>
        <authorList>
            <person name="Shakkottai V.G."/>
            <person name="Regaya I."/>
            <person name="Wulff H."/>
            <person name="Fajloun Z."/>
            <person name="Tomita H."/>
            <person name="Fathallah M."/>
            <person name="Cahalan M.D."/>
            <person name="Gargus J.J."/>
            <person name="Sabatier J.M."/>
            <person name="Chandy K.G."/>
        </authorList>
    </citation>
    <scope>FUNCTION</scope>
    <scope>MUTAGENESIS OF ARG-6 AND 6-MET-ARG-7</scope>
    <scope>SITES ALA-1; PHE-6; ARG-7 AND VAL-24</scope>
</reference>
<reference key="4">
    <citation type="journal article" date="2002" name="Biochemistry">
        <title>Role of disulfide bonds in folding and activity of leiurotoxin I: just two disulfides suffice.</title>
        <authorList>
            <person name="Zhu Q."/>
            <person name="Liang S."/>
            <person name="Martin L."/>
            <person name="Gasparini S."/>
            <person name="Menez A."/>
            <person name="Vita C."/>
        </authorList>
    </citation>
    <scope>SYNTHESIS</scope>
    <scope>NUMBER OF DISULFIDE BONDS REQUIRED FOR ACTIVITY</scope>
</reference>
<reference key="5">
    <citation type="journal article" date="2006" name="Toxicon">
        <title>Moving pieces in a taxonomic puzzle: venom 2D-LC/MS and data clustering analyses to infer phylogenetic relationships in some scorpions from the Buthidae family (Scorpiones).</title>
        <authorList>
            <person name="Nascimento D.G."/>
            <person name="Rates B."/>
            <person name="Santos D.M."/>
            <person name="Verano-Braga T."/>
            <person name="Barbosa-Silva A."/>
            <person name="Dutra A.A.A."/>
            <person name="Biondi I."/>
            <person name="Martin-Eauclaire M.-F."/>
            <person name="De Lima M.E."/>
            <person name="Pimenta A.M.C."/>
        </authorList>
    </citation>
    <scope>IDENTIFICATION BY MASS SPECTROMETRY</scope>
</reference>
<reference key="6">
    <citation type="journal article" date="1990" name="FEBS Lett.">
        <title>Solution conformation of leiurotoxin I (scyllatoxin) by 1H nuclear magnetic resonance. Resonance assignment and secondary structure.</title>
        <authorList>
            <person name="Martins J.C."/>
            <person name="Zhang W."/>
            <person name="Tartar A."/>
            <person name="Lazdunski M."/>
            <person name="Borremans F.A.M."/>
        </authorList>
    </citation>
    <scope>STRUCTURE BY NMR</scope>
    <scope>DISULFIDE BONDS</scope>
</reference>
<comment type="function">
    <text evidence="1 4 5">Blocker for the small conductance calcium-activated potassium channels (PubMed:11527975, PubMed:2307683, PubMed:2839478). Shows the best affinity for KCa2.2/KCNN2 (Kd=0.2 nM), followed by KCa2.3/KCNN3 (Kd=1.1 nM) and KCa2.1/KCNN1 (Kd=325 nM) (PubMed:11527975).</text>
</comment>
<comment type="subcellular location">
    <subcellularLocation>
        <location evidence="5">Secreted</location>
    </subcellularLocation>
</comment>
<comment type="tissue specificity">
    <text evidence="11">Expressed by the venom gland.</text>
</comment>
<comment type="domain">
    <text evidence="3">Has the structural arrangement of an alpha-helix connected to a beta-sheet by disulfide bonds (CSalpha/beta).</text>
</comment>
<comment type="PTM">
    <text evidence="2">Two disulfide bonds are the minimal requirement needed to produce a nativelike and bio-active conformation in this toxin. The third disulfide provides an additional contribution to structure stabilization and can modulate biological potency depending on its position and the structural regions involved in biological activity.</text>
</comment>
<comment type="miscellaneous">
    <text evidence="1">A mutant [R7diaminobutanoic acid] has been developed that discriminates KCa2.2/KCNN2 (Kd=3.8 nM) from KCa2.3/KCNN3 (Kd=2500 nM).</text>
</comment>
<comment type="similarity">
    <text evidence="9">Belongs to the short scorpion toxin superfamily. Potassium channel inhibitor family. Alpha-KTx 05 subfamily.</text>
</comment>
<feature type="peptide" id="PRO_0000044924" description="Potassium channel toxin alpha-KTx 5.1" evidence="5">
    <location>
        <begin position="1"/>
        <end position="31"/>
    </location>
</feature>
<feature type="region of interest" description="[R/K]XCQ motif" evidence="9">
    <location>
        <begin position="6"/>
        <end position="9"/>
    </location>
</feature>
<feature type="site" description="Interacts with KCa2.2/KCNN2 and KCa2.3/KCNN3" evidence="10">
    <location>
        <position position="1"/>
    </location>
</feature>
<feature type="site" description="Interacts with KCa2.2/KCNN2 and KCa2.3/KCNN3" evidence="10">
    <location>
        <position position="2"/>
    </location>
</feature>
<feature type="site" description="Interacts with KCa2.2/KCNN2 and KCa2.3/KCNN3" evidence="10">
    <location>
        <position position="7"/>
    </location>
</feature>
<feature type="site" description="Interacts with KCa2.2/KCNN2 and KCa2.3/KCNN3" evidence="10">
    <location>
        <position position="24"/>
    </location>
</feature>
<feature type="modified residue" description="Histidine amide" evidence="5">
    <location>
        <position position="31"/>
    </location>
</feature>
<feature type="disulfide bond" evidence="3 4 12">
    <location>
        <begin position="3"/>
        <end position="21"/>
    </location>
</feature>
<feature type="disulfide bond" evidence="3 4 12">
    <location>
        <begin position="8"/>
        <end position="26"/>
    </location>
</feature>
<feature type="disulfide bond" evidence="3 4 12">
    <location>
        <begin position="12"/>
        <end position="28"/>
    </location>
</feature>
<feature type="mutagenesis site" description="50-fold and 60-fold decrease in potency of inhibition of KCa2.2/KCNN2 and KCa2.3/KCNN3, respectively." evidence="1">
    <original>RM</original>
    <variation>MR</variation>
    <location>
        <begin position="6"/>
        <end position="7"/>
    </location>
</feature>
<feature type="mutagenesis site" description="20-fold and 30-fold decrease in potency of inhibition of KCa2.2/KCNN2 and KCa2.3/KCNN3, respectively." evidence="1">
    <original>R</original>
    <variation>K</variation>
    <location>
        <position position="6"/>
    </location>
</feature>
<feature type="mutagenesis site" description="75-fold and 165-fold decrease in potency of inhibition of KCa2.2/KCNN2 and KCa2.3/KCNN3, respectively." evidence="1">
    <original>R</original>
    <variation>L</variation>
    <location>
        <position position="6"/>
    </location>
</feature>
<feature type="helix" evidence="13">
    <location>
        <begin position="5"/>
        <end position="14"/>
    </location>
</feature>
<feature type="strand" evidence="13">
    <location>
        <begin position="18"/>
        <end position="21"/>
    </location>
</feature>
<feature type="strand" evidence="13">
    <location>
        <begin position="23"/>
        <end position="29"/>
    </location>
</feature>
<dbReference type="PIR" id="A28805">
    <property type="entry name" value="A28805"/>
</dbReference>
<dbReference type="PDB" id="1SCY">
    <property type="method" value="NMR"/>
    <property type="chains" value="A=1-31"/>
</dbReference>
<dbReference type="PDBsum" id="1SCY"/>
<dbReference type="BMRB" id="P16341"/>
<dbReference type="SMR" id="P16341"/>
<dbReference type="EvolutionaryTrace" id="P16341"/>
<dbReference type="GO" id="GO:0005576">
    <property type="term" value="C:extracellular region"/>
    <property type="evidence" value="ECO:0007669"/>
    <property type="project" value="UniProtKB-SubCell"/>
</dbReference>
<dbReference type="GO" id="GO:0008200">
    <property type="term" value="F:ion channel inhibitor activity"/>
    <property type="evidence" value="ECO:0007669"/>
    <property type="project" value="InterPro"/>
</dbReference>
<dbReference type="GO" id="GO:0015459">
    <property type="term" value="F:potassium channel regulator activity"/>
    <property type="evidence" value="ECO:0007669"/>
    <property type="project" value="UniProtKB-KW"/>
</dbReference>
<dbReference type="GO" id="GO:0090729">
    <property type="term" value="F:toxin activity"/>
    <property type="evidence" value="ECO:0007669"/>
    <property type="project" value="UniProtKB-KW"/>
</dbReference>
<dbReference type="InterPro" id="IPR036574">
    <property type="entry name" value="Scorpion_toxin-like_sf"/>
</dbReference>
<dbReference type="InterPro" id="IPR001947">
    <property type="entry name" value="Scorpion_toxinS_K_inh"/>
</dbReference>
<dbReference type="Pfam" id="PF00451">
    <property type="entry name" value="Toxin_2"/>
    <property type="match status" value="1"/>
</dbReference>
<dbReference type="SUPFAM" id="SSF57095">
    <property type="entry name" value="Scorpion toxin-like"/>
    <property type="match status" value="1"/>
</dbReference>
<dbReference type="PROSITE" id="PS01138">
    <property type="entry name" value="SCORP_SHORT_TOXIN"/>
    <property type="match status" value="1"/>
</dbReference>
<organism>
    <name type="scientific">Leiurus hebraeus</name>
    <name type="common">Hebrew deathstalker scorpion</name>
    <name type="synonym">Leiurus quinquestriatus hebraeus</name>
    <dbReference type="NCBI Taxonomy" id="2899558"/>
    <lineage>
        <taxon>Eukaryota</taxon>
        <taxon>Metazoa</taxon>
        <taxon>Ecdysozoa</taxon>
        <taxon>Arthropoda</taxon>
        <taxon>Chelicerata</taxon>
        <taxon>Arachnida</taxon>
        <taxon>Scorpiones</taxon>
        <taxon>Buthida</taxon>
        <taxon>Buthoidea</taxon>
        <taxon>Buthidae</taxon>
        <taxon>Leiurus</taxon>
    </lineage>
</organism>
<protein>
    <recommendedName>
        <fullName>Potassium channel toxin alpha-KTx 5.1</fullName>
    </recommendedName>
    <alternativeName>
        <fullName evidence="6 7 8">Leiurotoxin I</fullName>
        <shortName>LeTx I</shortName>
        <shortName>Lei-I</shortName>
    </alternativeName>
    <alternativeName>
        <fullName evidence="9">Leiurotoxin-1</fullName>
    </alternativeName>
    <alternativeName>
        <fullName evidence="6 7">Scyllatoxin</fullName>
        <shortName>ScyTx</shortName>
    </alternativeName>
</protein>
<name>KAX51_LEIHE</name>
<accession>P16341</accession>